<protein>
    <recommendedName>
        <fullName>Probable endo-1,3(4)-beta-glucanase ACLA_073210</fullName>
        <ecNumber>3.2.1.6</ecNumber>
    </recommendedName>
    <alternativeName>
        <fullName>Mixed-linked glucanase ACLA_073210</fullName>
    </alternativeName>
</protein>
<dbReference type="EC" id="3.2.1.6"/>
<dbReference type="EMBL" id="DS027045">
    <property type="protein sequence ID" value="EAW14286.1"/>
    <property type="molecule type" value="Genomic_DNA"/>
</dbReference>
<dbReference type="RefSeq" id="XP_001275712.1">
    <property type="nucleotide sequence ID" value="XM_001275711.1"/>
</dbReference>
<dbReference type="SMR" id="A1C7B5"/>
<dbReference type="STRING" id="344612.A1C7B5"/>
<dbReference type="EnsemblFungi" id="EAW14286">
    <property type="protein sequence ID" value="EAW14286"/>
    <property type="gene ID" value="ACLA_073210"/>
</dbReference>
<dbReference type="GeneID" id="4708021"/>
<dbReference type="KEGG" id="act:ACLA_073210"/>
<dbReference type="VEuPathDB" id="FungiDB:ACLA_073210"/>
<dbReference type="eggNOG" id="ENOG502QUM3">
    <property type="taxonomic scope" value="Eukaryota"/>
</dbReference>
<dbReference type="HOGENOM" id="CLU_016972_4_0_1"/>
<dbReference type="OMA" id="FYMGVDY"/>
<dbReference type="OrthoDB" id="192832at2759"/>
<dbReference type="Proteomes" id="UP000006701">
    <property type="component" value="Unassembled WGS sequence"/>
</dbReference>
<dbReference type="GO" id="GO:0005886">
    <property type="term" value="C:plasma membrane"/>
    <property type="evidence" value="ECO:0007669"/>
    <property type="project" value="UniProtKB-SubCell"/>
</dbReference>
<dbReference type="GO" id="GO:0098552">
    <property type="term" value="C:side of membrane"/>
    <property type="evidence" value="ECO:0007669"/>
    <property type="project" value="UniProtKB-KW"/>
</dbReference>
<dbReference type="GO" id="GO:0052861">
    <property type="term" value="F:endo-1,3(4)-beta-glucanase activity"/>
    <property type="evidence" value="ECO:0007669"/>
    <property type="project" value="UniProtKB-EC"/>
</dbReference>
<dbReference type="GO" id="GO:0030245">
    <property type="term" value="P:cellulose catabolic process"/>
    <property type="evidence" value="ECO:0007669"/>
    <property type="project" value="UniProtKB-KW"/>
</dbReference>
<dbReference type="CDD" id="cd02181">
    <property type="entry name" value="GH16_fungal_Lam16A_glucanase"/>
    <property type="match status" value="1"/>
</dbReference>
<dbReference type="FunFam" id="2.60.120.200:FF:000114">
    <property type="entry name" value="Probable endo-1,3(4)-beta-glucanase NFIA_089530"/>
    <property type="match status" value="1"/>
</dbReference>
<dbReference type="Gene3D" id="2.60.120.200">
    <property type="match status" value="1"/>
</dbReference>
<dbReference type="InterPro" id="IPR013320">
    <property type="entry name" value="ConA-like_dom_sf"/>
</dbReference>
<dbReference type="InterPro" id="IPR000757">
    <property type="entry name" value="GH16"/>
</dbReference>
<dbReference type="InterPro" id="IPR050546">
    <property type="entry name" value="Glycosyl_Hydrlase_16"/>
</dbReference>
<dbReference type="PANTHER" id="PTHR10963:SF58">
    <property type="entry name" value="ENDO-1,3(4)-BETA-GLUCANASE XGEA"/>
    <property type="match status" value="1"/>
</dbReference>
<dbReference type="PANTHER" id="PTHR10963">
    <property type="entry name" value="GLYCOSYL HYDROLASE-RELATED"/>
    <property type="match status" value="1"/>
</dbReference>
<dbReference type="SUPFAM" id="SSF49899">
    <property type="entry name" value="Concanavalin A-like lectins/glucanases"/>
    <property type="match status" value="1"/>
</dbReference>
<dbReference type="PROSITE" id="PS51762">
    <property type="entry name" value="GH16_2"/>
    <property type="match status" value="1"/>
</dbReference>
<organism>
    <name type="scientific">Aspergillus clavatus (strain ATCC 1007 / CBS 513.65 / DSM 816 / NCTC 3887 / NRRL 1 / QM 1276 / 107)</name>
    <dbReference type="NCBI Taxonomy" id="344612"/>
    <lineage>
        <taxon>Eukaryota</taxon>
        <taxon>Fungi</taxon>
        <taxon>Dikarya</taxon>
        <taxon>Ascomycota</taxon>
        <taxon>Pezizomycotina</taxon>
        <taxon>Eurotiomycetes</taxon>
        <taxon>Eurotiomycetidae</taxon>
        <taxon>Eurotiales</taxon>
        <taxon>Aspergillaceae</taxon>
        <taxon>Aspergillus</taxon>
        <taxon>Aspergillus subgen. Fumigati</taxon>
    </lineage>
</organism>
<accession>A1C7B5</accession>
<evidence type="ECO:0000250" key="1"/>
<evidence type="ECO:0000255" key="2"/>
<evidence type="ECO:0000255" key="3">
    <source>
        <dbReference type="PROSITE-ProRule" id="PRU01098"/>
    </source>
</evidence>
<evidence type="ECO:0000256" key="4">
    <source>
        <dbReference type="SAM" id="MobiDB-lite"/>
    </source>
</evidence>
<evidence type="ECO:0000305" key="5"/>
<proteinExistence type="inferred from homology"/>
<reference key="1">
    <citation type="journal article" date="2008" name="PLoS Genet.">
        <title>Genomic islands in the pathogenic filamentous fungus Aspergillus fumigatus.</title>
        <authorList>
            <person name="Fedorova N.D."/>
            <person name="Khaldi N."/>
            <person name="Joardar V.S."/>
            <person name="Maiti R."/>
            <person name="Amedeo P."/>
            <person name="Anderson M.J."/>
            <person name="Crabtree J."/>
            <person name="Silva J.C."/>
            <person name="Badger J.H."/>
            <person name="Albarraq A."/>
            <person name="Angiuoli S."/>
            <person name="Bussey H."/>
            <person name="Bowyer P."/>
            <person name="Cotty P.J."/>
            <person name="Dyer P.S."/>
            <person name="Egan A."/>
            <person name="Galens K."/>
            <person name="Fraser-Liggett C.M."/>
            <person name="Haas B.J."/>
            <person name="Inman J.M."/>
            <person name="Kent R."/>
            <person name="Lemieux S."/>
            <person name="Malavazi I."/>
            <person name="Orvis J."/>
            <person name="Roemer T."/>
            <person name="Ronning C.M."/>
            <person name="Sundaram J.P."/>
            <person name="Sutton G."/>
            <person name="Turner G."/>
            <person name="Venter J.C."/>
            <person name="White O.R."/>
            <person name="Whitty B.R."/>
            <person name="Youngman P."/>
            <person name="Wolfe K.H."/>
            <person name="Goldman G.H."/>
            <person name="Wortman J.R."/>
            <person name="Jiang B."/>
            <person name="Denning D.W."/>
            <person name="Nierman W.C."/>
        </authorList>
    </citation>
    <scope>NUCLEOTIDE SEQUENCE [LARGE SCALE GENOMIC DNA]</scope>
    <source>
        <strain>ATCC 1007 / CBS 513.65 / DSM 816 / NCTC 3887 / NRRL 1 / QM 1276 / 107</strain>
    </source>
</reference>
<keyword id="KW-0119">Carbohydrate metabolism</keyword>
<keyword id="KW-1003">Cell membrane</keyword>
<keyword id="KW-0136">Cellulose degradation</keyword>
<keyword id="KW-0325">Glycoprotein</keyword>
<keyword id="KW-0326">Glycosidase</keyword>
<keyword id="KW-0336">GPI-anchor</keyword>
<keyword id="KW-0378">Hydrolase</keyword>
<keyword id="KW-0449">Lipoprotein</keyword>
<keyword id="KW-0472">Membrane</keyword>
<keyword id="KW-0624">Polysaccharide degradation</keyword>
<keyword id="KW-1185">Reference proteome</keyword>
<keyword id="KW-0732">Signal</keyword>
<feature type="signal peptide" evidence="2">
    <location>
        <begin position="1"/>
        <end position="21"/>
    </location>
</feature>
<feature type="chain" id="PRO_0000395082" description="Probable endo-1,3(4)-beta-glucanase ACLA_073210">
    <location>
        <begin position="22"/>
        <end position="617"/>
    </location>
</feature>
<feature type="propeptide" id="PRO_0000395083" description="Removed in mature form" evidence="2">
    <location>
        <begin position="618"/>
        <end position="639"/>
    </location>
</feature>
<feature type="domain" description="GH16" evidence="3">
    <location>
        <begin position="26"/>
        <end position="290"/>
    </location>
</feature>
<feature type="region of interest" description="Disordered" evidence="4">
    <location>
        <begin position="337"/>
        <end position="384"/>
    </location>
</feature>
<feature type="region of interest" description="Disordered" evidence="4">
    <location>
        <begin position="442"/>
        <end position="545"/>
    </location>
</feature>
<feature type="compositionally biased region" description="Polar residues" evidence="4">
    <location>
        <begin position="339"/>
        <end position="348"/>
    </location>
</feature>
<feature type="compositionally biased region" description="Low complexity" evidence="4">
    <location>
        <begin position="362"/>
        <end position="376"/>
    </location>
</feature>
<feature type="compositionally biased region" description="Low complexity" evidence="4">
    <location>
        <begin position="478"/>
        <end position="488"/>
    </location>
</feature>
<feature type="active site" description="Nucleophile" evidence="1">
    <location>
        <position position="146"/>
    </location>
</feature>
<feature type="active site" description="Proton donor" evidence="1">
    <location>
        <position position="151"/>
    </location>
</feature>
<feature type="lipid moiety-binding region" description="GPI-anchor amidated alanine" evidence="2">
    <location>
        <position position="617"/>
    </location>
</feature>
<feature type="glycosylation site" description="N-linked (GlcNAc...) asparagine" evidence="2">
    <location>
        <position position="65"/>
    </location>
</feature>
<name>EGLX_ASPCL</name>
<sequence length="639" mass="65108">MAPSSLLLSVGSLIASSLASATSLQIREQSQSYQLTESWQGESFINDWNFFDRGDPTNGYVTYVNQSVAESSGLVKVTQSGSFYMGVDYESKLNPDGPGRESVRIESKKYYTQGLYVVDIAHMPGSICGTWPAFWSVGANWPHDGEIDIIEGVNKHDANEIVLHTSGSCDVAGSHDMTGSLTSGECGDASGTIGCVVKGTQGSAGDPFNAQGGGVYAIEWTDSFLKIWFFPRNSIPASITAGKPDSSAFGTPMAHLQGTCDFAERFKEQKFILDTTFCGDWAGNVFGESGCPLSDASSPMRSCVDYVAQNPAAFKEAYWEINSIKIYQLGAAPAPATVASPNTASEVHSASELAPATQTEKPTVPTAAETTVVPPASQTSTVAEETPIAPLATAATVTAVNPAPPATQPTAEPATAVTVTDGGDSFRTIFLTSTTTICPEAQSSSSAAAHGGNKNAPVGAVPGQPSGADAVGNPNPSTTTEAVAETETSQPELTAGGISELPKSAPAPTASQPTSEFKPSDVPDVPKPSPEAEHPAPPAAAGSSIINTPSSSAIFGSSTAVGTFTSLARVSRPTGGATFVPTIATATGSPTVGEDGSSGSATASATLTAPTGILFTAGARKLSVGLSGLVGALAVAALA</sequence>
<comment type="function">
    <text evidence="1">Mixed-linked glucanase involved in the degradation of complex natural cellulosic substrates.</text>
</comment>
<comment type="catalytic activity">
    <reaction>
        <text>Endohydrolysis of (1-&gt;3)- or (1-&gt;4)-linkages in beta-D-glucans when the glucose residue whose reducing group is involved in the linkage to be hydrolyzed is itself substituted at C-3.</text>
        <dbReference type="EC" id="3.2.1.6"/>
    </reaction>
</comment>
<comment type="subcellular location">
    <subcellularLocation>
        <location evidence="1">Cell membrane</location>
        <topology evidence="1">Lipid-anchor</topology>
        <topology evidence="1">GPI-anchor</topology>
    </subcellularLocation>
</comment>
<comment type="similarity">
    <text evidence="5">Belongs to the glycosyl hydrolase 16 family.</text>
</comment>
<gene>
    <name type="ORF">ACLA_073210</name>
</gene>